<reference key="1">
    <citation type="journal article" date="2000" name="Nature">
        <title>Complete genome sequence of Pseudomonas aeruginosa PAO1, an opportunistic pathogen.</title>
        <authorList>
            <person name="Stover C.K."/>
            <person name="Pham X.-Q.T."/>
            <person name="Erwin A.L."/>
            <person name="Mizoguchi S.D."/>
            <person name="Warrener P."/>
            <person name="Hickey M.J."/>
            <person name="Brinkman F.S.L."/>
            <person name="Hufnagle W.O."/>
            <person name="Kowalik D.J."/>
            <person name="Lagrou M."/>
            <person name="Garber R.L."/>
            <person name="Goltry L."/>
            <person name="Tolentino E."/>
            <person name="Westbrock-Wadman S."/>
            <person name="Yuan Y."/>
            <person name="Brody L.L."/>
            <person name="Coulter S.N."/>
            <person name="Folger K.R."/>
            <person name="Kas A."/>
            <person name="Larbig K."/>
            <person name="Lim R.M."/>
            <person name="Smith K.A."/>
            <person name="Spencer D.H."/>
            <person name="Wong G.K.-S."/>
            <person name="Wu Z."/>
            <person name="Paulsen I.T."/>
            <person name="Reizer J."/>
            <person name="Saier M.H. Jr."/>
            <person name="Hancock R.E.W."/>
            <person name="Lory S."/>
            <person name="Olson M.V."/>
        </authorList>
    </citation>
    <scope>NUCLEOTIDE SEQUENCE [LARGE SCALE GENOMIC DNA]</scope>
    <source>
        <strain>ATCC 15692 / DSM 22644 / CIP 104116 / JCM 14847 / LMG 12228 / 1C / PRS 101 / PAO1</strain>
    </source>
</reference>
<reference key="2">
    <citation type="journal article" date="1995" name="Int. J. Syst. Bacteriol.">
        <title>Comparative ribosomal protein sequence analyses of a phylogenetically defined genus, Pseudomonas, and its relatives.</title>
        <authorList>
            <person name="Ochi K."/>
        </authorList>
    </citation>
    <scope>PROTEIN SEQUENCE OF 2-23</scope>
    <source>
        <strain>ATCC 10145 / DSM 50071 / JCM 5962 / LMG 1242 / NBRC 12689 / NCIMB 8295 / NRRL B-771</strain>
    </source>
</reference>
<dbReference type="EMBL" id="AE004091">
    <property type="protein sequence ID" value="AAG07951.1"/>
    <property type="molecule type" value="Genomic_DNA"/>
</dbReference>
<dbReference type="PIR" id="E83074">
    <property type="entry name" value="E83074"/>
</dbReference>
<dbReference type="RefSeq" id="NP_253253.1">
    <property type="nucleotide sequence ID" value="NC_002516.2"/>
</dbReference>
<dbReference type="RefSeq" id="WP_003094744.1">
    <property type="nucleotide sequence ID" value="NZ_QZGE01000004.1"/>
</dbReference>
<dbReference type="PDB" id="7UNR">
    <property type="method" value="EM"/>
    <property type="resolution" value="2.90 A"/>
    <property type="chains" value="t=1-91"/>
</dbReference>
<dbReference type="PDB" id="7UNU">
    <property type="method" value="EM"/>
    <property type="resolution" value="2.90 A"/>
    <property type="chains" value="t=1-91"/>
</dbReference>
<dbReference type="PDB" id="7UNV">
    <property type="method" value="EM"/>
    <property type="resolution" value="2.70 A"/>
    <property type="chains" value="t=1-91"/>
</dbReference>
<dbReference type="PDB" id="7UNW">
    <property type="method" value="EM"/>
    <property type="resolution" value="2.60 A"/>
    <property type="chains" value="t=1-91"/>
</dbReference>
<dbReference type="PDB" id="8CD1">
    <property type="method" value="EM"/>
    <property type="resolution" value="3.00 A"/>
    <property type="chains" value="t=1-91"/>
</dbReference>
<dbReference type="PDB" id="8RWG">
    <property type="method" value="EM"/>
    <property type="resolution" value="2.46 A"/>
    <property type="chains" value="s=1-91"/>
</dbReference>
<dbReference type="PDBsum" id="7UNR"/>
<dbReference type="PDBsum" id="7UNU"/>
<dbReference type="PDBsum" id="7UNV"/>
<dbReference type="PDBsum" id="7UNW"/>
<dbReference type="PDBsum" id="8CD1"/>
<dbReference type="PDBsum" id="8RWG"/>
<dbReference type="EMDB" id="EMD-16566"/>
<dbReference type="EMDB" id="EMD-19547"/>
<dbReference type="EMDB" id="EMD-26630"/>
<dbReference type="EMDB" id="EMD-26633"/>
<dbReference type="EMDB" id="EMD-26634"/>
<dbReference type="EMDB" id="EMD-26635"/>
<dbReference type="SMR" id="Q9HVM1"/>
<dbReference type="FunCoup" id="Q9HVM1">
    <property type="interactions" value="674"/>
</dbReference>
<dbReference type="STRING" id="208964.PA4563"/>
<dbReference type="PaxDb" id="208964-PA4563"/>
<dbReference type="DNASU" id="879605"/>
<dbReference type="GeneID" id="879605"/>
<dbReference type="KEGG" id="pae:PA4563"/>
<dbReference type="PATRIC" id="fig|208964.12.peg.4775"/>
<dbReference type="PseudoCAP" id="PA4563"/>
<dbReference type="HOGENOM" id="CLU_160655_4_0_6"/>
<dbReference type="InParanoid" id="Q9HVM1"/>
<dbReference type="OrthoDB" id="9807974at2"/>
<dbReference type="PhylomeDB" id="Q9HVM1"/>
<dbReference type="BioCyc" id="PAER208964:G1FZ6-4656-MONOMER"/>
<dbReference type="PRO" id="PR:Q9HVM1"/>
<dbReference type="Proteomes" id="UP000002438">
    <property type="component" value="Chromosome"/>
</dbReference>
<dbReference type="GO" id="GO:0005829">
    <property type="term" value="C:cytosol"/>
    <property type="evidence" value="ECO:0000318"/>
    <property type="project" value="GO_Central"/>
</dbReference>
<dbReference type="GO" id="GO:0015935">
    <property type="term" value="C:small ribosomal subunit"/>
    <property type="evidence" value="ECO:0000318"/>
    <property type="project" value="GO_Central"/>
</dbReference>
<dbReference type="GO" id="GO:0070181">
    <property type="term" value="F:small ribosomal subunit rRNA binding"/>
    <property type="evidence" value="ECO:0000318"/>
    <property type="project" value="GO_Central"/>
</dbReference>
<dbReference type="GO" id="GO:0003735">
    <property type="term" value="F:structural constituent of ribosome"/>
    <property type="evidence" value="ECO:0007669"/>
    <property type="project" value="InterPro"/>
</dbReference>
<dbReference type="GO" id="GO:0006412">
    <property type="term" value="P:translation"/>
    <property type="evidence" value="ECO:0007669"/>
    <property type="project" value="UniProtKB-UniRule"/>
</dbReference>
<dbReference type="FunFam" id="1.20.58.110:FF:000001">
    <property type="entry name" value="30S ribosomal protein S20"/>
    <property type="match status" value="1"/>
</dbReference>
<dbReference type="Gene3D" id="1.20.58.110">
    <property type="entry name" value="Ribosomal protein S20"/>
    <property type="match status" value="1"/>
</dbReference>
<dbReference type="HAMAP" id="MF_00500">
    <property type="entry name" value="Ribosomal_bS20"/>
    <property type="match status" value="1"/>
</dbReference>
<dbReference type="InterPro" id="IPR002583">
    <property type="entry name" value="Ribosomal_bS20"/>
</dbReference>
<dbReference type="InterPro" id="IPR036510">
    <property type="entry name" value="Ribosomal_bS20_sf"/>
</dbReference>
<dbReference type="NCBIfam" id="TIGR00029">
    <property type="entry name" value="S20"/>
    <property type="match status" value="1"/>
</dbReference>
<dbReference type="PANTHER" id="PTHR33398">
    <property type="entry name" value="30S RIBOSOMAL PROTEIN S20"/>
    <property type="match status" value="1"/>
</dbReference>
<dbReference type="PANTHER" id="PTHR33398:SF1">
    <property type="entry name" value="SMALL RIBOSOMAL SUBUNIT PROTEIN BS20C"/>
    <property type="match status" value="1"/>
</dbReference>
<dbReference type="Pfam" id="PF01649">
    <property type="entry name" value="Ribosomal_S20p"/>
    <property type="match status" value="1"/>
</dbReference>
<dbReference type="SUPFAM" id="SSF46992">
    <property type="entry name" value="Ribosomal protein S20"/>
    <property type="match status" value="1"/>
</dbReference>
<protein>
    <recommendedName>
        <fullName evidence="1">Small ribosomal subunit protein bS20</fullName>
    </recommendedName>
    <alternativeName>
        <fullName evidence="4">30S ribosomal protein S20</fullName>
    </alternativeName>
</protein>
<organism>
    <name type="scientific">Pseudomonas aeruginosa (strain ATCC 15692 / DSM 22644 / CIP 104116 / JCM 14847 / LMG 12228 / 1C / PRS 101 / PAO1)</name>
    <dbReference type="NCBI Taxonomy" id="208964"/>
    <lineage>
        <taxon>Bacteria</taxon>
        <taxon>Pseudomonadati</taxon>
        <taxon>Pseudomonadota</taxon>
        <taxon>Gammaproteobacteria</taxon>
        <taxon>Pseudomonadales</taxon>
        <taxon>Pseudomonadaceae</taxon>
        <taxon>Pseudomonas</taxon>
    </lineage>
</organism>
<gene>
    <name evidence="1" type="primary">rpsT</name>
    <name type="ordered locus">PA4563</name>
</gene>
<comment type="function">
    <text evidence="1">Binds directly to 16S ribosomal RNA.</text>
</comment>
<comment type="similarity">
    <text evidence="1">Belongs to the bacterial ribosomal protein bS20 family.</text>
</comment>
<evidence type="ECO:0000255" key="1">
    <source>
        <dbReference type="HAMAP-Rule" id="MF_00500"/>
    </source>
</evidence>
<evidence type="ECO:0000256" key="2">
    <source>
        <dbReference type="SAM" id="MobiDB-lite"/>
    </source>
</evidence>
<evidence type="ECO:0000269" key="3">
    <source>
    </source>
</evidence>
<evidence type="ECO:0000305" key="4"/>
<name>RS20_PSEAE</name>
<proteinExistence type="evidence at protein level"/>
<accession>Q9HVM1</accession>
<accession>Q9R4Q3</accession>
<feature type="initiator methionine" description="Removed" evidence="3">
    <location>
        <position position="1"/>
    </location>
</feature>
<feature type="chain" id="PRO_0000168014" description="Small ribosomal subunit protein bS20">
    <location>
        <begin position="2"/>
        <end position="91"/>
    </location>
</feature>
<feature type="region of interest" description="Disordered" evidence="2">
    <location>
        <begin position="1"/>
        <end position="23"/>
    </location>
</feature>
<feature type="compositionally biased region" description="Basic residues" evidence="2">
    <location>
        <begin position="7"/>
        <end position="20"/>
    </location>
</feature>
<keyword id="KW-0002">3D-structure</keyword>
<keyword id="KW-0903">Direct protein sequencing</keyword>
<keyword id="KW-1185">Reference proteome</keyword>
<keyword id="KW-0687">Ribonucleoprotein</keyword>
<keyword id="KW-0689">Ribosomal protein</keyword>
<keyword id="KW-0694">RNA-binding</keyword>
<keyword id="KW-0699">rRNA-binding</keyword>
<sequence length="91" mass="9918">MANTPSAKKRAKQAEKRRSHNASLRSMVRTYIKNVVKAIDAKDLEKAQAAFTAAVPVIDRMADKGIIHKNKAARHKSRLSGHIKALSTAAA</sequence>